<protein>
    <recommendedName>
        <fullName evidence="1">Large ribosomal subunit protein uL29</fullName>
    </recommendedName>
    <alternativeName>
        <fullName evidence="2">50S ribosomal protein L29</fullName>
    </alternativeName>
</protein>
<proteinExistence type="evidence at protein level"/>
<accession>Q6A6N4</accession>
<organism>
    <name type="scientific">Cutibacterium acnes (strain DSM 16379 / KPA171202)</name>
    <name type="common">Propionibacterium acnes</name>
    <dbReference type="NCBI Taxonomy" id="267747"/>
    <lineage>
        <taxon>Bacteria</taxon>
        <taxon>Bacillati</taxon>
        <taxon>Actinomycetota</taxon>
        <taxon>Actinomycetes</taxon>
        <taxon>Propionibacteriales</taxon>
        <taxon>Propionibacteriaceae</taxon>
        <taxon>Cutibacterium</taxon>
    </lineage>
</organism>
<gene>
    <name evidence="1" type="primary">rpmC</name>
    <name type="ordered locus">PPA1855</name>
</gene>
<name>RL29_CUTAK</name>
<feature type="chain" id="PRO_1000121798" description="Large ribosomal subunit protein uL29">
    <location>
        <begin position="1"/>
        <end position="77"/>
    </location>
</feature>
<feature type="helix" evidence="3">
    <location>
        <begin position="7"/>
        <end position="11"/>
    </location>
</feature>
<feature type="helix" evidence="3">
    <location>
        <begin position="14"/>
        <end position="37"/>
    </location>
</feature>
<feature type="helix" evidence="3">
    <location>
        <begin position="45"/>
        <end position="64"/>
    </location>
</feature>
<comment type="similarity">
    <text evidence="1">Belongs to the universal ribosomal protein uL29 family.</text>
</comment>
<sequence>MPKLSAAELRQLSGEELRNKVRELKEELFGLRFQSATGQLENTARLREVRKDIARVYTVLQERNLNIVDDPDSTKEA</sequence>
<dbReference type="EMBL" id="AE017283">
    <property type="protein sequence ID" value="AAT83579.1"/>
    <property type="molecule type" value="Genomic_DNA"/>
</dbReference>
<dbReference type="RefSeq" id="WP_002514861.1">
    <property type="nucleotide sequence ID" value="NZ_CP025935.1"/>
</dbReference>
<dbReference type="PDB" id="8CRX">
    <property type="method" value="EM"/>
    <property type="resolution" value="2.78 A"/>
    <property type="chains" value="x=1-77"/>
</dbReference>
<dbReference type="PDB" id="8CVM">
    <property type="method" value="EM"/>
    <property type="resolution" value="2.66 A"/>
    <property type="chains" value="x=1-77"/>
</dbReference>
<dbReference type="PDBsum" id="8CRX"/>
<dbReference type="PDBsum" id="8CVM"/>
<dbReference type="SMR" id="Q6A6N4"/>
<dbReference type="EnsemblBacteria" id="AAT83579">
    <property type="protein sequence ID" value="AAT83579"/>
    <property type="gene ID" value="PPA1855"/>
</dbReference>
<dbReference type="GeneID" id="92881202"/>
<dbReference type="KEGG" id="pac:PPA1855"/>
<dbReference type="eggNOG" id="COG0255">
    <property type="taxonomic scope" value="Bacteria"/>
</dbReference>
<dbReference type="HOGENOM" id="CLU_158491_3_3_11"/>
<dbReference type="Proteomes" id="UP000000603">
    <property type="component" value="Chromosome"/>
</dbReference>
<dbReference type="GO" id="GO:0022625">
    <property type="term" value="C:cytosolic large ribosomal subunit"/>
    <property type="evidence" value="ECO:0007669"/>
    <property type="project" value="TreeGrafter"/>
</dbReference>
<dbReference type="GO" id="GO:0003735">
    <property type="term" value="F:structural constituent of ribosome"/>
    <property type="evidence" value="ECO:0007669"/>
    <property type="project" value="InterPro"/>
</dbReference>
<dbReference type="GO" id="GO:0006412">
    <property type="term" value="P:translation"/>
    <property type="evidence" value="ECO:0007669"/>
    <property type="project" value="UniProtKB-UniRule"/>
</dbReference>
<dbReference type="CDD" id="cd00427">
    <property type="entry name" value="Ribosomal_L29_HIP"/>
    <property type="match status" value="1"/>
</dbReference>
<dbReference type="FunFam" id="1.10.287.310:FF:000001">
    <property type="entry name" value="50S ribosomal protein L29"/>
    <property type="match status" value="1"/>
</dbReference>
<dbReference type="Gene3D" id="1.10.287.310">
    <property type="match status" value="1"/>
</dbReference>
<dbReference type="HAMAP" id="MF_00374">
    <property type="entry name" value="Ribosomal_uL29"/>
    <property type="match status" value="1"/>
</dbReference>
<dbReference type="InterPro" id="IPR050063">
    <property type="entry name" value="Ribosomal_protein_uL29"/>
</dbReference>
<dbReference type="InterPro" id="IPR001854">
    <property type="entry name" value="Ribosomal_uL29"/>
</dbReference>
<dbReference type="InterPro" id="IPR018254">
    <property type="entry name" value="Ribosomal_uL29_CS"/>
</dbReference>
<dbReference type="InterPro" id="IPR036049">
    <property type="entry name" value="Ribosomal_uL29_sf"/>
</dbReference>
<dbReference type="NCBIfam" id="TIGR00012">
    <property type="entry name" value="L29"/>
    <property type="match status" value="1"/>
</dbReference>
<dbReference type="PANTHER" id="PTHR10916">
    <property type="entry name" value="60S RIBOSOMAL PROTEIN L35/50S RIBOSOMAL PROTEIN L29"/>
    <property type="match status" value="1"/>
</dbReference>
<dbReference type="PANTHER" id="PTHR10916:SF0">
    <property type="entry name" value="LARGE RIBOSOMAL SUBUNIT PROTEIN UL29C"/>
    <property type="match status" value="1"/>
</dbReference>
<dbReference type="Pfam" id="PF00831">
    <property type="entry name" value="Ribosomal_L29"/>
    <property type="match status" value="1"/>
</dbReference>
<dbReference type="SUPFAM" id="SSF46561">
    <property type="entry name" value="Ribosomal protein L29 (L29p)"/>
    <property type="match status" value="1"/>
</dbReference>
<dbReference type="PROSITE" id="PS00579">
    <property type="entry name" value="RIBOSOMAL_L29"/>
    <property type="match status" value="1"/>
</dbReference>
<keyword id="KW-0002">3D-structure</keyword>
<keyword id="KW-0687">Ribonucleoprotein</keyword>
<keyword id="KW-0689">Ribosomal protein</keyword>
<evidence type="ECO:0000255" key="1">
    <source>
        <dbReference type="HAMAP-Rule" id="MF_00374"/>
    </source>
</evidence>
<evidence type="ECO:0000305" key="2"/>
<evidence type="ECO:0007829" key="3">
    <source>
        <dbReference type="PDB" id="8CVM"/>
    </source>
</evidence>
<reference key="1">
    <citation type="journal article" date="2004" name="Science">
        <title>The complete genome sequence of Propionibacterium acnes, a commensal of human skin.</title>
        <authorList>
            <person name="Brueggemann H."/>
            <person name="Henne A."/>
            <person name="Hoster F."/>
            <person name="Liesegang H."/>
            <person name="Wiezer A."/>
            <person name="Strittmatter A."/>
            <person name="Hujer S."/>
            <person name="Duerre P."/>
            <person name="Gottschalk G."/>
        </authorList>
    </citation>
    <scope>NUCLEOTIDE SEQUENCE [LARGE SCALE GENOMIC DNA]</scope>
    <source>
        <strain>DSM 16379 / KPA171202</strain>
    </source>
</reference>